<name>CNRP1_HUMAN</name>
<dbReference type="EMBL" id="AY144596">
    <property type="protein sequence ID" value="AAN41658.1"/>
    <property type="molecule type" value="mRNA"/>
</dbReference>
<dbReference type="EMBL" id="AK311784">
    <property type="protein sequence ID" value="BAG34727.1"/>
    <property type="molecule type" value="mRNA"/>
</dbReference>
<dbReference type="EMBL" id="AC015969">
    <property type="protein sequence ID" value="AAX93120.1"/>
    <property type="molecule type" value="Genomic_DNA"/>
</dbReference>
<dbReference type="EMBL" id="CH471053">
    <property type="protein sequence ID" value="EAW99877.1"/>
    <property type="molecule type" value="Genomic_DNA"/>
</dbReference>
<dbReference type="EMBL" id="BC011535">
    <property type="protein sequence ID" value="AAH11535.1"/>
    <property type="molecule type" value="mRNA"/>
</dbReference>
<dbReference type="EMBL" id="AL110235">
    <property type="protein sequence ID" value="CAB53688.1"/>
    <property type="molecule type" value="mRNA"/>
</dbReference>
<dbReference type="CCDS" id="CCDS1886.1">
    <molecule id="Q96F85-1"/>
</dbReference>
<dbReference type="CCDS" id="CCDS46311.1">
    <molecule id="Q96F85-2"/>
</dbReference>
<dbReference type="PIR" id="T14768">
    <property type="entry name" value="T14768"/>
</dbReference>
<dbReference type="RefSeq" id="NP_001104571.1">
    <molecule id="Q96F85-2"/>
    <property type="nucleotide sequence ID" value="NM_001111101.2"/>
</dbReference>
<dbReference type="RefSeq" id="NP_001358533.1">
    <molecule id="Q96F85-1"/>
    <property type="nucleotide sequence ID" value="NM_001371604.1"/>
</dbReference>
<dbReference type="RefSeq" id="NP_001358534.1">
    <molecule id="Q96F85-1"/>
    <property type="nucleotide sequence ID" value="NM_001371605.1"/>
</dbReference>
<dbReference type="RefSeq" id="NP_001358535.1">
    <molecule id="Q96F85-1"/>
    <property type="nucleotide sequence ID" value="NM_001371606.1"/>
</dbReference>
<dbReference type="RefSeq" id="NP_056278.1">
    <molecule id="Q96F85-1"/>
    <property type="nucleotide sequence ID" value="NM_015463.3"/>
</dbReference>
<dbReference type="RefSeq" id="XP_005264306.1">
    <property type="nucleotide sequence ID" value="XM_005264249.1"/>
</dbReference>
<dbReference type="RefSeq" id="XP_006712047.1">
    <property type="nucleotide sequence ID" value="XM_006711984.1"/>
</dbReference>
<dbReference type="SMR" id="Q96F85"/>
<dbReference type="BioGRID" id="117427">
    <property type="interactions" value="24"/>
</dbReference>
<dbReference type="FunCoup" id="Q96F85">
    <property type="interactions" value="771"/>
</dbReference>
<dbReference type="IntAct" id="Q96F85">
    <property type="interactions" value="13"/>
</dbReference>
<dbReference type="MINT" id="Q96F85"/>
<dbReference type="STRING" id="9606.ENSP00000263655"/>
<dbReference type="GlyGen" id="Q96F85">
    <property type="glycosylation" value="1 site"/>
</dbReference>
<dbReference type="iPTMnet" id="Q96F85"/>
<dbReference type="PhosphoSitePlus" id="Q96F85"/>
<dbReference type="SwissPalm" id="Q96F85"/>
<dbReference type="BioMuta" id="CNRIP1"/>
<dbReference type="jPOST" id="Q96F85"/>
<dbReference type="MassIVE" id="Q96F85"/>
<dbReference type="PaxDb" id="9606-ENSP00000263655"/>
<dbReference type="PeptideAtlas" id="Q96F85"/>
<dbReference type="ProteomicsDB" id="76501">
    <molecule id="Q96F85-1"/>
</dbReference>
<dbReference type="ProteomicsDB" id="76502">
    <molecule id="Q96F85-2"/>
</dbReference>
<dbReference type="Pumba" id="Q96F85"/>
<dbReference type="Antibodypedia" id="30920">
    <property type="antibodies" value="91 antibodies from 23 providers"/>
</dbReference>
<dbReference type="DNASU" id="25927"/>
<dbReference type="Ensembl" id="ENST00000263655.4">
    <molecule id="Q96F85-1"/>
    <property type="protein sequence ID" value="ENSP00000263655.3"/>
    <property type="gene ID" value="ENSG00000119865.9"/>
</dbReference>
<dbReference type="Ensembl" id="ENST00000409559.7">
    <molecule id="Q96F85-2"/>
    <property type="protein sequence ID" value="ENSP00000386883.3"/>
    <property type="gene ID" value="ENSG00000119865.9"/>
</dbReference>
<dbReference type="GeneID" id="25927"/>
<dbReference type="KEGG" id="hsa:25927"/>
<dbReference type="MANE-Select" id="ENST00000263655.4">
    <property type="protein sequence ID" value="ENSP00000263655.3"/>
    <property type="RefSeq nucleotide sequence ID" value="NM_015463.3"/>
    <property type="RefSeq protein sequence ID" value="NP_056278.1"/>
</dbReference>
<dbReference type="UCSC" id="uc002sej.5">
    <molecule id="Q96F85-1"/>
    <property type="organism name" value="human"/>
</dbReference>
<dbReference type="AGR" id="HGNC:24546"/>
<dbReference type="CTD" id="25927"/>
<dbReference type="DisGeNET" id="25927"/>
<dbReference type="GeneCards" id="CNRIP1"/>
<dbReference type="HGNC" id="HGNC:24546">
    <property type="gene designation" value="CNRIP1"/>
</dbReference>
<dbReference type="HPA" id="ENSG00000119865">
    <property type="expression patterns" value="Tissue enhanced (brain)"/>
</dbReference>
<dbReference type="MIM" id="618538">
    <property type="type" value="gene"/>
</dbReference>
<dbReference type="neXtProt" id="NX_Q96F85"/>
<dbReference type="OpenTargets" id="ENSG00000119865"/>
<dbReference type="PharmGKB" id="PA162382635"/>
<dbReference type="VEuPathDB" id="HostDB:ENSG00000119865"/>
<dbReference type="eggNOG" id="ENOG502QTXE">
    <property type="taxonomic scope" value="Eukaryota"/>
</dbReference>
<dbReference type="GeneTree" id="ENSGT00390000004284"/>
<dbReference type="HOGENOM" id="CLU_110298_0_0_1"/>
<dbReference type="InParanoid" id="Q96F85"/>
<dbReference type="OMA" id="YCKMETS"/>
<dbReference type="OrthoDB" id="5920443at2759"/>
<dbReference type="PAN-GO" id="Q96F85">
    <property type="GO annotations" value="3 GO annotations based on evolutionary models"/>
</dbReference>
<dbReference type="PhylomeDB" id="Q96F85"/>
<dbReference type="TreeFam" id="TF332485"/>
<dbReference type="PathwayCommons" id="Q96F85"/>
<dbReference type="SignaLink" id="Q96F85"/>
<dbReference type="BioGRID-ORCS" id="25927">
    <property type="hits" value="12 hits in 1156 CRISPR screens"/>
</dbReference>
<dbReference type="GenomeRNAi" id="25927"/>
<dbReference type="Pharos" id="Q96F85">
    <property type="development level" value="Tbio"/>
</dbReference>
<dbReference type="PRO" id="PR:Q96F85"/>
<dbReference type="Proteomes" id="UP000005640">
    <property type="component" value="Chromosome 2"/>
</dbReference>
<dbReference type="RNAct" id="Q96F85">
    <property type="molecule type" value="protein"/>
</dbReference>
<dbReference type="Bgee" id="ENSG00000119865">
    <property type="expression patterns" value="Expressed in secondary oocyte and 181 other cell types or tissues"/>
</dbReference>
<dbReference type="ExpressionAtlas" id="Q96F85">
    <property type="expression patterns" value="baseline and differential"/>
</dbReference>
<dbReference type="GO" id="GO:0005737">
    <property type="term" value="C:cytoplasm"/>
    <property type="evidence" value="ECO:0000314"/>
    <property type="project" value="UniProtKB"/>
</dbReference>
<dbReference type="GO" id="GO:0098982">
    <property type="term" value="C:GABA-ergic synapse"/>
    <property type="evidence" value="ECO:0007669"/>
    <property type="project" value="Ensembl"/>
</dbReference>
<dbReference type="GO" id="GO:0098978">
    <property type="term" value="C:glutamatergic synapse"/>
    <property type="evidence" value="ECO:0007669"/>
    <property type="project" value="Ensembl"/>
</dbReference>
<dbReference type="GO" id="GO:0005886">
    <property type="term" value="C:plasma membrane"/>
    <property type="evidence" value="ECO:0000314"/>
    <property type="project" value="UniProtKB"/>
</dbReference>
<dbReference type="GO" id="GO:0098793">
    <property type="term" value="C:presynapse"/>
    <property type="evidence" value="ECO:0007669"/>
    <property type="project" value="Ensembl"/>
</dbReference>
<dbReference type="GO" id="GO:0031718">
    <property type="term" value="F:type 1 cannabinoid receptor binding"/>
    <property type="evidence" value="ECO:0000353"/>
    <property type="project" value="UniProtKB"/>
</dbReference>
<dbReference type="GO" id="GO:2000272">
    <property type="term" value="P:negative regulation of signaling receptor activity"/>
    <property type="evidence" value="ECO:0000314"/>
    <property type="project" value="UniProtKB"/>
</dbReference>
<dbReference type="GO" id="GO:0010469">
    <property type="term" value="P:regulation of signaling receptor activity"/>
    <property type="evidence" value="ECO:0000314"/>
    <property type="project" value="UniProtKB"/>
</dbReference>
<dbReference type="GO" id="GO:0150036">
    <property type="term" value="P:regulation of trans-synaptic signaling by endocannabinoid, modulating synaptic transmission"/>
    <property type="evidence" value="ECO:0007669"/>
    <property type="project" value="Ensembl"/>
</dbReference>
<dbReference type="InterPro" id="IPR029204">
    <property type="entry name" value="CNRIP1"/>
</dbReference>
<dbReference type="PANTHER" id="PTHR31952">
    <property type="entry name" value="CB1 CANNABINOID RECEPTOR-INTERACTING PROTEIN 1"/>
    <property type="match status" value="1"/>
</dbReference>
<dbReference type="PANTHER" id="PTHR31952:SF1">
    <property type="entry name" value="CB1 CANNABINOID RECEPTOR-INTERACTING PROTEIN 1"/>
    <property type="match status" value="1"/>
</dbReference>
<dbReference type="Pfam" id="PF15043">
    <property type="entry name" value="CNRIP1"/>
    <property type="match status" value="1"/>
</dbReference>
<evidence type="ECO:0000269" key="1">
    <source>
    </source>
</evidence>
<evidence type="ECO:0000303" key="2">
    <source>
    </source>
</evidence>
<evidence type="ECO:0000305" key="3"/>
<protein>
    <recommendedName>
        <fullName>CB1 cannabinoid receptor-interacting protein 1</fullName>
        <shortName>CRIP-1</shortName>
    </recommendedName>
</protein>
<sequence length="164" mass="18648">MGDLPGLVRLSIALRIQPNDGPVFYKVDGQRFGQNRTIKLLTGSSYKVEVKIKPSTLQVENISIGGVLVPLELKSKEPDGDRVVYTGTYDTEGVTPTKSGERQPIQITMPFTDIGTFETVWQVKFYNYHKRDHCQWGSPFSVIEYECKPNETRSLMWVNKESFL</sequence>
<accession>Q96F85</accession>
<accession>B2R4D0</accession>
<accession>Q49AN4</accession>
<accession>Q9UFZ0</accession>
<proteinExistence type="evidence at protein level"/>
<reference key="1">
    <citation type="journal article" date="2007" name="Mol. Pharmacol.">
        <title>CB1 cannabinoid receptor activity is modulated by the cannabinoid receptor interacting protein CRIP 1a.</title>
        <authorList>
            <person name="Niehaus J.L."/>
            <person name="Liu Y."/>
            <person name="Wallis K.T."/>
            <person name="Egertova M."/>
            <person name="Bhartur S.G."/>
            <person name="Mukhopadhyay S."/>
            <person name="Shi S."/>
            <person name="He H."/>
            <person name="Selley D.E."/>
            <person name="Howlett A.C."/>
            <person name="Elphick M.R."/>
            <person name="Lewis D.L."/>
        </authorList>
    </citation>
    <scope>NUCLEOTIDE SEQUENCE [MRNA] (ISOFORM 2)</scope>
    <scope>FUNCTION</scope>
    <scope>INTERACTION WITH CNR1</scope>
    <scope>ALTERNATIVE SPLICING</scope>
    <source>
        <tissue>Brain</tissue>
    </source>
</reference>
<reference key="2">
    <citation type="journal article" date="2004" name="Nat. Genet.">
        <title>Complete sequencing and characterization of 21,243 full-length human cDNAs.</title>
        <authorList>
            <person name="Ota T."/>
            <person name="Suzuki Y."/>
            <person name="Nishikawa T."/>
            <person name="Otsuki T."/>
            <person name="Sugiyama T."/>
            <person name="Irie R."/>
            <person name="Wakamatsu A."/>
            <person name="Hayashi K."/>
            <person name="Sato H."/>
            <person name="Nagai K."/>
            <person name="Kimura K."/>
            <person name="Makita H."/>
            <person name="Sekine M."/>
            <person name="Obayashi M."/>
            <person name="Nishi T."/>
            <person name="Shibahara T."/>
            <person name="Tanaka T."/>
            <person name="Ishii S."/>
            <person name="Yamamoto J."/>
            <person name="Saito K."/>
            <person name="Kawai Y."/>
            <person name="Isono Y."/>
            <person name="Nakamura Y."/>
            <person name="Nagahari K."/>
            <person name="Murakami K."/>
            <person name="Yasuda T."/>
            <person name="Iwayanagi T."/>
            <person name="Wagatsuma M."/>
            <person name="Shiratori A."/>
            <person name="Sudo H."/>
            <person name="Hosoiri T."/>
            <person name="Kaku Y."/>
            <person name="Kodaira H."/>
            <person name="Kondo H."/>
            <person name="Sugawara M."/>
            <person name="Takahashi M."/>
            <person name="Kanda K."/>
            <person name="Yokoi T."/>
            <person name="Furuya T."/>
            <person name="Kikkawa E."/>
            <person name="Omura Y."/>
            <person name="Abe K."/>
            <person name="Kamihara K."/>
            <person name="Katsuta N."/>
            <person name="Sato K."/>
            <person name="Tanikawa M."/>
            <person name="Yamazaki M."/>
            <person name="Ninomiya K."/>
            <person name="Ishibashi T."/>
            <person name="Yamashita H."/>
            <person name="Murakawa K."/>
            <person name="Fujimori K."/>
            <person name="Tanai H."/>
            <person name="Kimata M."/>
            <person name="Watanabe M."/>
            <person name="Hiraoka S."/>
            <person name="Chiba Y."/>
            <person name="Ishida S."/>
            <person name="Ono Y."/>
            <person name="Takiguchi S."/>
            <person name="Watanabe S."/>
            <person name="Yosida M."/>
            <person name="Hotuta T."/>
            <person name="Kusano J."/>
            <person name="Kanehori K."/>
            <person name="Takahashi-Fujii A."/>
            <person name="Hara H."/>
            <person name="Tanase T.-O."/>
            <person name="Nomura Y."/>
            <person name="Togiya S."/>
            <person name="Komai F."/>
            <person name="Hara R."/>
            <person name="Takeuchi K."/>
            <person name="Arita M."/>
            <person name="Imose N."/>
            <person name="Musashino K."/>
            <person name="Yuuki H."/>
            <person name="Oshima A."/>
            <person name="Sasaki N."/>
            <person name="Aotsuka S."/>
            <person name="Yoshikawa Y."/>
            <person name="Matsunawa H."/>
            <person name="Ichihara T."/>
            <person name="Shiohata N."/>
            <person name="Sano S."/>
            <person name="Moriya S."/>
            <person name="Momiyama H."/>
            <person name="Satoh N."/>
            <person name="Takami S."/>
            <person name="Terashima Y."/>
            <person name="Suzuki O."/>
            <person name="Nakagawa S."/>
            <person name="Senoh A."/>
            <person name="Mizoguchi H."/>
            <person name="Goto Y."/>
            <person name="Shimizu F."/>
            <person name="Wakebe H."/>
            <person name="Hishigaki H."/>
            <person name="Watanabe T."/>
            <person name="Sugiyama A."/>
            <person name="Takemoto M."/>
            <person name="Kawakami B."/>
            <person name="Yamazaki M."/>
            <person name="Watanabe K."/>
            <person name="Kumagai A."/>
            <person name="Itakura S."/>
            <person name="Fukuzumi Y."/>
            <person name="Fujimori Y."/>
            <person name="Komiyama M."/>
            <person name="Tashiro H."/>
            <person name="Tanigami A."/>
            <person name="Fujiwara T."/>
            <person name="Ono T."/>
            <person name="Yamada K."/>
            <person name="Fujii Y."/>
            <person name="Ozaki K."/>
            <person name="Hirao M."/>
            <person name="Ohmori Y."/>
            <person name="Kawabata A."/>
            <person name="Hikiji T."/>
            <person name="Kobatake N."/>
            <person name="Inagaki H."/>
            <person name="Ikema Y."/>
            <person name="Okamoto S."/>
            <person name="Okitani R."/>
            <person name="Kawakami T."/>
            <person name="Noguchi S."/>
            <person name="Itoh T."/>
            <person name="Shigeta K."/>
            <person name="Senba T."/>
            <person name="Matsumura K."/>
            <person name="Nakajima Y."/>
            <person name="Mizuno T."/>
            <person name="Morinaga M."/>
            <person name="Sasaki M."/>
            <person name="Togashi T."/>
            <person name="Oyama M."/>
            <person name="Hata H."/>
            <person name="Watanabe M."/>
            <person name="Komatsu T."/>
            <person name="Mizushima-Sugano J."/>
            <person name="Satoh T."/>
            <person name="Shirai Y."/>
            <person name="Takahashi Y."/>
            <person name="Nakagawa K."/>
            <person name="Okumura K."/>
            <person name="Nagase T."/>
            <person name="Nomura N."/>
            <person name="Kikuchi H."/>
            <person name="Masuho Y."/>
            <person name="Yamashita R."/>
            <person name="Nakai K."/>
            <person name="Yada T."/>
            <person name="Nakamura Y."/>
            <person name="Ohara O."/>
            <person name="Isogai T."/>
            <person name="Sugano S."/>
        </authorList>
    </citation>
    <scope>NUCLEOTIDE SEQUENCE [LARGE SCALE MRNA] (ISOFORM 1)</scope>
    <source>
        <tissue>Teratocarcinoma</tissue>
    </source>
</reference>
<reference key="3">
    <citation type="journal article" date="2005" name="Nature">
        <title>Generation and annotation of the DNA sequences of human chromosomes 2 and 4.</title>
        <authorList>
            <person name="Hillier L.W."/>
            <person name="Graves T.A."/>
            <person name="Fulton R.S."/>
            <person name="Fulton L.A."/>
            <person name="Pepin K.H."/>
            <person name="Minx P."/>
            <person name="Wagner-McPherson C."/>
            <person name="Layman D."/>
            <person name="Wylie K."/>
            <person name="Sekhon M."/>
            <person name="Becker M.C."/>
            <person name="Fewell G.A."/>
            <person name="Delehaunty K.D."/>
            <person name="Miner T.L."/>
            <person name="Nash W.E."/>
            <person name="Kremitzki C."/>
            <person name="Oddy L."/>
            <person name="Du H."/>
            <person name="Sun H."/>
            <person name="Bradshaw-Cordum H."/>
            <person name="Ali J."/>
            <person name="Carter J."/>
            <person name="Cordes M."/>
            <person name="Harris A."/>
            <person name="Isak A."/>
            <person name="van Brunt A."/>
            <person name="Nguyen C."/>
            <person name="Du F."/>
            <person name="Courtney L."/>
            <person name="Kalicki J."/>
            <person name="Ozersky P."/>
            <person name="Abbott S."/>
            <person name="Armstrong J."/>
            <person name="Belter E.A."/>
            <person name="Caruso L."/>
            <person name="Cedroni M."/>
            <person name="Cotton M."/>
            <person name="Davidson T."/>
            <person name="Desai A."/>
            <person name="Elliott G."/>
            <person name="Erb T."/>
            <person name="Fronick C."/>
            <person name="Gaige T."/>
            <person name="Haakenson W."/>
            <person name="Haglund K."/>
            <person name="Holmes A."/>
            <person name="Harkins R."/>
            <person name="Kim K."/>
            <person name="Kruchowski S.S."/>
            <person name="Strong C.M."/>
            <person name="Grewal N."/>
            <person name="Goyea E."/>
            <person name="Hou S."/>
            <person name="Levy A."/>
            <person name="Martinka S."/>
            <person name="Mead K."/>
            <person name="McLellan M.D."/>
            <person name="Meyer R."/>
            <person name="Randall-Maher J."/>
            <person name="Tomlinson C."/>
            <person name="Dauphin-Kohlberg S."/>
            <person name="Kozlowicz-Reilly A."/>
            <person name="Shah N."/>
            <person name="Swearengen-Shahid S."/>
            <person name="Snider J."/>
            <person name="Strong J.T."/>
            <person name="Thompson J."/>
            <person name="Yoakum M."/>
            <person name="Leonard S."/>
            <person name="Pearman C."/>
            <person name="Trani L."/>
            <person name="Radionenko M."/>
            <person name="Waligorski J.E."/>
            <person name="Wang C."/>
            <person name="Rock S.M."/>
            <person name="Tin-Wollam A.-M."/>
            <person name="Maupin R."/>
            <person name="Latreille P."/>
            <person name="Wendl M.C."/>
            <person name="Yang S.-P."/>
            <person name="Pohl C."/>
            <person name="Wallis J.W."/>
            <person name="Spieth J."/>
            <person name="Bieri T.A."/>
            <person name="Berkowicz N."/>
            <person name="Nelson J.O."/>
            <person name="Osborne J."/>
            <person name="Ding L."/>
            <person name="Meyer R."/>
            <person name="Sabo A."/>
            <person name="Shotland Y."/>
            <person name="Sinha P."/>
            <person name="Wohldmann P.E."/>
            <person name="Cook L.L."/>
            <person name="Hickenbotham M.T."/>
            <person name="Eldred J."/>
            <person name="Williams D."/>
            <person name="Jones T.A."/>
            <person name="She X."/>
            <person name="Ciccarelli F.D."/>
            <person name="Izaurralde E."/>
            <person name="Taylor J."/>
            <person name="Schmutz J."/>
            <person name="Myers R.M."/>
            <person name="Cox D.R."/>
            <person name="Huang X."/>
            <person name="McPherson J.D."/>
            <person name="Mardis E.R."/>
            <person name="Clifton S.W."/>
            <person name="Warren W.C."/>
            <person name="Chinwalla A.T."/>
            <person name="Eddy S.R."/>
            <person name="Marra M.A."/>
            <person name="Ovcharenko I."/>
            <person name="Furey T.S."/>
            <person name="Miller W."/>
            <person name="Eichler E.E."/>
            <person name="Bork P."/>
            <person name="Suyama M."/>
            <person name="Torrents D."/>
            <person name="Waterston R.H."/>
            <person name="Wilson R.K."/>
        </authorList>
    </citation>
    <scope>NUCLEOTIDE SEQUENCE [LARGE SCALE GENOMIC DNA]</scope>
</reference>
<reference key="4">
    <citation type="submission" date="2005-09" db="EMBL/GenBank/DDBJ databases">
        <authorList>
            <person name="Mural R.J."/>
            <person name="Istrail S."/>
            <person name="Sutton G.G."/>
            <person name="Florea L."/>
            <person name="Halpern A.L."/>
            <person name="Mobarry C.M."/>
            <person name="Lippert R."/>
            <person name="Walenz B."/>
            <person name="Shatkay H."/>
            <person name="Dew I."/>
            <person name="Miller J.R."/>
            <person name="Flanigan M.J."/>
            <person name="Edwards N.J."/>
            <person name="Bolanos R."/>
            <person name="Fasulo D."/>
            <person name="Halldorsson B.V."/>
            <person name="Hannenhalli S."/>
            <person name="Turner R."/>
            <person name="Yooseph S."/>
            <person name="Lu F."/>
            <person name="Nusskern D.R."/>
            <person name="Shue B.C."/>
            <person name="Zheng X.H."/>
            <person name="Zhong F."/>
            <person name="Delcher A.L."/>
            <person name="Huson D.H."/>
            <person name="Kravitz S.A."/>
            <person name="Mouchard L."/>
            <person name="Reinert K."/>
            <person name="Remington K.A."/>
            <person name="Clark A.G."/>
            <person name="Waterman M.S."/>
            <person name="Eichler E.E."/>
            <person name="Adams M.D."/>
            <person name="Hunkapiller M.W."/>
            <person name="Myers E.W."/>
            <person name="Venter J.C."/>
        </authorList>
    </citation>
    <scope>NUCLEOTIDE SEQUENCE [LARGE SCALE GENOMIC DNA]</scope>
</reference>
<reference key="5">
    <citation type="journal article" date="2004" name="Genome Res.">
        <title>The status, quality, and expansion of the NIH full-length cDNA project: the Mammalian Gene Collection (MGC).</title>
        <authorList>
            <consortium name="The MGC Project Team"/>
        </authorList>
    </citation>
    <scope>NUCLEOTIDE SEQUENCE [LARGE SCALE MRNA] (ISOFORM 1)</scope>
    <source>
        <tissue>Eye</tissue>
    </source>
</reference>
<reference key="6">
    <citation type="journal article" date="2007" name="BMC Genomics">
        <title>The full-ORF clone resource of the German cDNA consortium.</title>
        <authorList>
            <person name="Bechtel S."/>
            <person name="Rosenfelder H."/>
            <person name="Duda A."/>
            <person name="Schmidt C.P."/>
            <person name="Ernst U."/>
            <person name="Wellenreuther R."/>
            <person name="Mehrle A."/>
            <person name="Schuster C."/>
            <person name="Bahr A."/>
            <person name="Bloecker H."/>
            <person name="Heubner D."/>
            <person name="Hoerlein A."/>
            <person name="Michel G."/>
            <person name="Wedler H."/>
            <person name="Koehrer K."/>
            <person name="Ottenwaelder B."/>
            <person name="Poustka A."/>
            <person name="Wiemann S."/>
            <person name="Schupp I."/>
        </authorList>
    </citation>
    <scope>NUCLEOTIDE SEQUENCE [LARGE SCALE MRNA] OF 2-164 (ISOFORM 1)</scope>
    <source>
        <tissue>Kidney</tissue>
    </source>
</reference>
<reference key="7">
    <citation type="submission" date="2008-12" db="UniProtKB">
        <authorList>
            <person name="Lubec G."/>
            <person name="Afjehi-Sadat L."/>
            <person name="Chen W.-Q."/>
            <person name="Sun Y."/>
        </authorList>
    </citation>
    <scope>PROTEIN SEQUENCE OF 16-26; 52-74; 83-98 AND 154-160</scope>
    <scope>IDENTIFICATION BY MASS SPECTROMETRY</scope>
    <source>
        <tissue>Brain</tissue>
        <tissue>Cajal-Retzius cell</tissue>
        <tissue>Fetal brain cortex</tissue>
    </source>
</reference>
<reference key="8">
    <citation type="journal article" date="2011" name="BMC Syst. Biol.">
        <title>Initial characterization of the human central proteome.</title>
        <authorList>
            <person name="Burkard T.R."/>
            <person name="Planyavsky M."/>
            <person name="Kaupe I."/>
            <person name="Breitwieser F.P."/>
            <person name="Buerckstuemmer T."/>
            <person name="Bennett K.L."/>
            <person name="Superti-Furga G."/>
            <person name="Colinge J."/>
        </authorList>
    </citation>
    <scope>IDENTIFICATION BY MASS SPECTROMETRY [LARGE SCALE ANALYSIS]</scope>
</reference>
<keyword id="KW-0025">Alternative splicing</keyword>
<keyword id="KW-0903">Direct protein sequencing</keyword>
<keyword id="KW-1267">Proteomics identification</keyword>
<keyword id="KW-1185">Reference proteome</keyword>
<gene>
    <name type="primary">CNRIP1</name>
    <name type="synonym">C2orf32</name>
</gene>
<feature type="chain" id="PRO_0000089360" description="CB1 cannabinoid receptor-interacting protein 1">
    <location>
        <begin position="1"/>
        <end position="164"/>
    </location>
</feature>
<feature type="splice variant" id="VSP_035598" description="In isoform 2." evidence="2">
    <original>FTDIGTFETVWQVKFYNYHKRDHCQWGSPFSVIEYECKPNETRSLMWVNKESFL</original>
    <variation>ECLEQRPQEISLTYECEE</variation>
    <location>
        <begin position="111"/>
        <end position="164"/>
    </location>
</feature>
<feature type="sequence conflict" description="In Ref. 6; CAB53688." evidence="3" ref="6">
    <original>I</original>
    <variation>T</variation>
    <location>
        <position position="16"/>
    </location>
</feature>
<organism>
    <name type="scientific">Homo sapiens</name>
    <name type="common">Human</name>
    <dbReference type="NCBI Taxonomy" id="9606"/>
    <lineage>
        <taxon>Eukaryota</taxon>
        <taxon>Metazoa</taxon>
        <taxon>Chordata</taxon>
        <taxon>Craniata</taxon>
        <taxon>Vertebrata</taxon>
        <taxon>Euteleostomi</taxon>
        <taxon>Mammalia</taxon>
        <taxon>Eutheria</taxon>
        <taxon>Euarchontoglires</taxon>
        <taxon>Primates</taxon>
        <taxon>Haplorrhini</taxon>
        <taxon>Catarrhini</taxon>
        <taxon>Hominidae</taxon>
        <taxon>Homo</taxon>
    </lineage>
</organism>
<comment type="function">
    <molecule>Isoform 1</molecule>
    <text evidence="1">Suppresses cannabinoid receptor CNR1-mediated tonic inhibition of voltage-gated calcium channels.</text>
</comment>
<comment type="function">
    <molecule>Isoform 2</molecule>
    <text evidence="1">Does not suppress cannabinoid receptor CNR1-mediated tonic inhibition of voltage-gated calcium channels.</text>
</comment>
<comment type="subunit">
    <text evidence="1">Interacts with the cannabinoid receptor CNR1 (via C-terminus). Does not interact with cannabinoid receptor CNR2.</text>
</comment>
<comment type="interaction">
    <interactant intactId="EBI-958255">
        <id>Q96F85</id>
    </interactant>
    <interactant intactId="EBI-739759">
        <id>Q9NRG1</id>
        <label>PRTFDC1</label>
    </interactant>
    <organismsDiffer>false</organismsDiffer>
    <experiments>3</experiments>
</comment>
<comment type="interaction">
    <interactant intactId="EBI-958255">
        <id>Q96F85</id>
    </interactant>
    <interactant intactId="EBI-2799703">
        <id>O95070</id>
        <label>YIF1A</label>
    </interactant>
    <organismsDiffer>false</organismsDiffer>
    <experiments>3</experiments>
</comment>
<comment type="alternative products">
    <event type="alternative splicing"/>
    <isoform>
        <id>Q96F85-1</id>
        <name>1</name>
        <name>CRIP1a</name>
        <sequence type="displayed"/>
    </isoform>
    <isoform>
        <id>Q96F85-2</id>
        <name>2</name>
        <name>CRIP1b</name>
        <sequence type="described" ref="VSP_035598"/>
    </isoform>
</comment>
<comment type="similarity">
    <text evidence="3">Belongs to the CNRIP family.</text>
</comment>